<dbReference type="PIR" id="JX0072">
    <property type="entry name" value="JX0072"/>
</dbReference>
<dbReference type="SMR" id="P15159"/>
<dbReference type="GO" id="GO:0016460">
    <property type="term" value="C:myosin II complex"/>
    <property type="evidence" value="ECO:0007669"/>
    <property type="project" value="TreeGrafter"/>
</dbReference>
<dbReference type="GO" id="GO:0005509">
    <property type="term" value="F:calcium ion binding"/>
    <property type="evidence" value="ECO:0007669"/>
    <property type="project" value="InterPro"/>
</dbReference>
<dbReference type="CDD" id="cd00051">
    <property type="entry name" value="EFh"/>
    <property type="match status" value="1"/>
</dbReference>
<dbReference type="FunFam" id="1.10.238.10:FF:000001">
    <property type="entry name" value="Calmodulin 1"/>
    <property type="match status" value="1"/>
</dbReference>
<dbReference type="Gene3D" id="1.10.238.10">
    <property type="entry name" value="EF-hand"/>
    <property type="match status" value="3"/>
</dbReference>
<dbReference type="InterPro" id="IPR050230">
    <property type="entry name" value="CALM/Myosin/TropC-like"/>
</dbReference>
<dbReference type="InterPro" id="IPR011992">
    <property type="entry name" value="EF-hand-dom_pair"/>
</dbReference>
<dbReference type="InterPro" id="IPR018247">
    <property type="entry name" value="EF_Hand_1_Ca_BS"/>
</dbReference>
<dbReference type="InterPro" id="IPR002048">
    <property type="entry name" value="EF_hand_dom"/>
</dbReference>
<dbReference type="PANTHER" id="PTHR23048:SF0">
    <property type="entry name" value="CALMODULIN LIKE 3"/>
    <property type="match status" value="1"/>
</dbReference>
<dbReference type="PANTHER" id="PTHR23048">
    <property type="entry name" value="MYOSIN LIGHT CHAIN 1, 3"/>
    <property type="match status" value="1"/>
</dbReference>
<dbReference type="Pfam" id="PF13499">
    <property type="entry name" value="EF-hand_7"/>
    <property type="match status" value="2"/>
</dbReference>
<dbReference type="SMART" id="SM00054">
    <property type="entry name" value="EFh"/>
    <property type="match status" value="4"/>
</dbReference>
<dbReference type="SUPFAM" id="SSF47473">
    <property type="entry name" value="EF-hand"/>
    <property type="match status" value="1"/>
</dbReference>
<dbReference type="PROSITE" id="PS00018">
    <property type="entry name" value="EF_HAND_1"/>
    <property type="match status" value="2"/>
</dbReference>
<dbReference type="PROSITE" id="PS50222">
    <property type="entry name" value="EF_HAND_2"/>
    <property type="match status" value="4"/>
</dbReference>
<reference key="1">
    <citation type="journal article" date="1989" name="J. Biochem.">
        <title>Amino acid sequence of horseshoe crab, Tachypleus tridentatus, striated muscle troponin C.</title>
        <authorList>
            <person name="Kobayashi T."/>
            <person name="Kagami O."/>
            <person name="Takagi T."/>
            <person name="Konishi K."/>
        </authorList>
    </citation>
    <scope>PROTEIN SEQUENCE</scope>
    <source>
        <tissue>Skeletal muscle</tissue>
    </source>
</reference>
<sequence>AGAAEDLSKEQVQMLRKAFDMFDRDKKGVIHTNMVSTILRTLGQTFEEKDLKDLIAEIDQDGSGELEFEEFMALAARFLVEEDAEAMQEELREAFRLYDKQGQGFINVSDLRDILRALDDKLTEDELDEMIAEIDTDGSGTVDFDEFMEMMTG</sequence>
<protein>
    <recommendedName>
        <fullName>Troponin C</fullName>
    </recommendedName>
</protein>
<keyword id="KW-0106">Calcium</keyword>
<keyword id="KW-0903">Direct protein sequencing</keyword>
<keyword id="KW-0479">Metal-binding</keyword>
<keyword id="KW-0514">Muscle protein</keyword>
<keyword id="KW-0677">Repeat</keyword>
<comment type="function">
    <text>Troponin is the central regulatory protein of striated muscle contraction. Tn consists of three components: Tn-I which is the inhibitor of actomyosin ATPase, Tn-T which contains the binding site for tropomyosin and Tn-C. The binding of calcium to Tn-C abolishes the inhibitory action of Tn on actin filaments.</text>
</comment>
<comment type="similarity">
    <text evidence="3">Belongs to the troponin C family.</text>
</comment>
<accession>P15159</accession>
<name>TNNC_TACTR</name>
<evidence type="ECO:0000255" key="1">
    <source>
        <dbReference type="PROSITE-ProRule" id="PRU00448"/>
    </source>
</evidence>
<evidence type="ECO:0000269" key="2">
    <source>
    </source>
</evidence>
<evidence type="ECO:0000305" key="3"/>
<feature type="chain" id="PRO_0000073694" description="Troponin C">
    <location>
        <begin position="1"/>
        <end position="153"/>
    </location>
</feature>
<feature type="domain" description="EF-hand 1" evidence="1">
    <location>
        <begin position="10"/>
        <end position="45"/>
    </location>
</feature>
<feature type="domain" description="EF-hand 2" evidence="1">
    <location>
        <begin position="46"/>
        <end position="81"/>
    </location>
</feature>
<feature type="domain" description="EF-hand 3" evidence="1">
    <location>
        <begin position="86"/>
        <end position="121"/>
    </location>
</feature>
<feature type="domain" description="EF-hand 4" evidence="1">
    <location>
        <begin position="122"/>
        <end position="153"/>
    </location>
</feature>
<feature type="binding site" evidence="1">
    <location>
        <position position="59"/>
    </location>
    <ligand>
        <name>Ca(2+)</name>
        <dbReference type="ChEBI" id="CHEBI:29108"/>
        <label>1</label>
    </ligand>
</feature>
<feature type="binding site" evidence="1">
    <location>
        <position position="61"/>
    </location>
    <ligand>
        <name>Ca(2+)</name>
        <dbReference type="ChEBI" id="CHEBI:29108"/>
        <label>1</label>
    </ligand>
</feature>
<feature type="binding site" evidence="1">
    <location>
        <position position="63"/>
    </location>
    <ligand>
        <name>Ca(2+)</name>
        <dbReference type="ChEBI" id="CHEBI:29108"/>
        <label>1</label>
    </ligand>
</feature>
<feature type="binding site" evidence="1">
    <location>
        <position position="65"/>
    </location>
    <ligand>
        <name>Ca(2+)</name>
        <dbReference type="ChEBI" id="CHEBI:29108"/>
        <label>1</label>
    </ligand>
</feature>
<feature type="binding site" evidence="1">
    <location>
        <position position="70"/>
    </location>
    <ligand>
        <name>Ca(2+)</name>
        <dbReference type="ChEBI" id="CHEBI:29108"/>
        <label>1</label>
    </ligand>
</feature>
<feature type="binding site" evidence="3">
    <location>
        <position position="99"/>
    </location>
    <ligand>
        <name>Ca(2+)</name>
        <dbReference type="ChEBI" id="CHEBI:29108"/>
        <label>2</label>
    </ligand>
</feature>
<feature type="binding site" evidence="3">
    <location>
        <position position="110"/>
    </location>
    <ligand>
        <name>Ca(2+)</name>
        <dbReference type="ChEBI" id="CHEBI:29108"/>
        <label>2</label>
    </ligand>
</feature>
<feature type="binding site" evidence="1">
    <location>
        <position position="135"/>
    </location>
    <ligand>
        <name>Ca(2+)</name>
        <dbReference type="ChEBI" id="CHEBI:29108"/>
        <label>3</label>
    </ligand>
</feature>
<feature type="binding site" evidence="1">
    <location>
        <position position="137"/>
    </location>
    <ligand>
        <name>Ca(2+)</name>
        <dbReference type="ChEBI" id="CHEBI:29108"/>
        <label>3</label>
    </ligand>
</feature>
<feature type="binding site" evidence="1">
    <location>
        <position position="139"/>
    </location>
    <ligand>
        <name>Ca(2+)</name>
        <dbReference type="ChEBI" id="CHEBI:29108"/>
        <label>3</label>
    </ligand>
</feature>
<feature type="binding site" evidence="1">
    <location>
        <position position="141"/>
    </location>
    <ligand>
        <name>Ca(2+)</name>
        <dbReference type="ChEBI" id="CHEBI:29108"/>
        <label>3</label>
    </ligand>
</feature>
<feature type="binding site" evidence="1">
    <location>
        <position position="146"/>
    </location>
    <ligand>
        <name>Ca(2+)</name>
        <dbReference type="ChEBI" id="CHEBI:29108"/>
        <label>3</label>
    </ligand>
</feature>
<feature type="modified residue" description="Blocked amino end (Ala)" evidence="2">
    <location>
        <position position="1"/>
    </location>
</feature>
<proteinExistence type="evidence at protein level"/>
<organism>
    <name type="scientific">Tachypleus tridentatus</name>
    <name type="common">Japanese horseshoe crab</name>
    <dbReference type="NCBI Taxonomy" id="6853"/>
    <lineage>
        <taxon>Eukaryota</taxon>
        <taxon>Metazoa</taxon>
        <taxon>Ecdysozoa</taxon>
        <taxon>Arthropoda</taxon>
        <taxon>Chelicerata</taxon>
        <taxon>Merostomata</taxon>
        <taxon>Xiphosura</taxon>
        <taxon>Limulidae</taxon>
        <taxon>Tachypleus</taxon>
    </lineage>
</organism>